<keyword id="KW-0002">3D-structure</keyword>
<keyword id="KW-0539">Nucleus</keyword>
<keyword id="KW-1185">Reference proteome</keyword>
<keyword id="KW-0804">Transcription</keyword>
<keyword id="KW-0805">Transcription regulation</keyword>
<accession>Q27272</accession>
<accession>Q95RJ4</accession>
<accession>Q9VX16</accession>
<reference key="1">
    <citation type="journal article" date="1994" name="Nature">
        <title>Molecular cloning of Drosophila TFIID subunits.</title>
        <authorList>
            <person name="Kokubo T."/>
            <person name="Gong D.-W."/>
            <person name="Wootton J.C."/>
            <person name="Horikoshi M."/>
            <person name="Roeder R.G."/>
            <person name="Nakatani Y."/>
        </authorList>
    </citation>
    <scope>NUCLEOTIDE SEQUENCE [MRNA]</scope>
</reference>
<reference key="2">
    <citation type="journal article" date="1993" name="Cell">
        <title>Drosophila TAFII40 interacts with both a VP16 activation domain and the basal transcription factor TFIIB.</title>
        <authorList>
            <person name="Goodrich J.A."/>
            <person name="Hoey T."/>
            <person name="Thut C.J."/>
            <person name="Admon A."/>
            <person name="Tjian R."/>
        </authorList>
    </citation>
    <scope>NUCLEOTIDE SEQUENCE [MRNA]</scope>
    <scope>FUNCTION</scope>
    <source>
        <strain>Oregon-R</strain>
    </source>
</reference>
<reference key="3">
    <citation type="journal article" date="2000" name="Science">
        <title>The genome sequence of Drosophila melanogaster.</title>
        <authorList>
            <person name="Adams M.D."/>
            <person name="Celniker S.E."/>
            <person name="Holt R.A."/>
            <person name="Evans C.A."/>
            <person name="Gocayne J.D."/>
            <person name="Amanatides P.G."/>
            <person name="Scherer S.E."/>
            <person name="Li P.W."/>
            <person name="Hoskins R.A."/>
            <person name="Galle R.F."/>
            <person name="George R.A."/>
            <person name="Lewis S.E."/>
            <person name="Richards S."/>
            <person name="Ashburner M."/>
            <person name="Henderson S.N."/>
            <person name="Sutton G.G."/>
            <person name="Wortman J.R."/>
            <person name="Yandell M.D."/>
            <person name="Zhang Q."/>
            <person name="Chen L.X."/>
            <person name="Brandon R.C."/>
            <person name="Rogers Y.-H.C."/>
            <person name="Blazej R.G."/>
            <person name="Champe M."/>
            <person name="Pfeiffer B.D."/>
            <person name="Wan K.H."/>
            <person name="Doyle C."/>
            <person name="Baxter E.G."/>
            <person name="Helt G."/>
            <person name="Nelson C.R."/>
            <person name="Miklos G.L.G."/>
            <person name="Abril J.F."/>
            <person name="Agbayani A."/>
            <person name="An H.-J."/>
            <person name="Andrews-Pfannkoch C."/>
            <person name="Baldwin D."/>
            <person name="Ballew R.M."/>
            <person name="Basu A."/>
            <person name="Baxendale J."/>
            <person name="Bayraktaroglu L."/>
            <person name="Beasley E.M."/>
            <person name="Beeson K.Y."/>
            <person name="Benos P.V."/>
            <person name="Berman B.P."/>
            <person name="Bhandari D."/>
            <person name="Bolshakov S."/>
            <person name="Borkova D."/>
            <person name="Botchan M.R."/>
            <person name="Bouck J."/>
            <person name="Brokstein P."/>
            <person name="Brottier P."/>
            <person name="Burtis K.C."/>
            <person name="Busam D.A."/>
            <person name="Butler H."/>
            <person name="Cadieu E."/>
            <person name="Center A."/>
            <person name="Chandra I."/>
            <person name="Cherry J.M."/>
            <person name="Cawley S."/>
            <person name="Dahlke C."/>
            <person name="Davenport L.B."/>
            <person name="Davies P."/>
            <person name="de Pablos B."/>
            <person name="Delcher A."/>
            <person name="Deng Z."/>
            <person name="Mays A.D."/>
            <person name="Dew I."/>
            <person name="Dietz S.M."/>
            <person name="Dodson K."/>
            <person name="Doup L.E."/>
            <person name="Downes M."/>
            <person name="Dugan-Rocha S."/>
            <person name="Dunkov B.C."/>
            <person name="Dunn P."/>
            <person name="Durbin K.J."/>
            <person name="Evangelista C.C."/>
            <person name="Ferraz C."/>
            <person name="Ferriera S."/>
            <person name="Fleischmann W."/>
            <person name="Fosler C."/>
            <person name="Gabrielian A.E."/>
            <person name="Garg N.S."/>
            <person name="Gelbart W.M."/>
            <person name="Glasser K."/>
            <person name="Glodek A."/>
            <person name="Gong F."/>
            <person name="Gorrell J.H."/>
            <person name="Gu Z."/>
            <person name="Guan P."/>
            <person name="Harris M."/>
            <person name="Harris N.L."/>
            <person name="Harvey D.A."/>
            <person name="Heiman T.J."/>
            <person name="Hernandez J.R."/>
            <person name="Houck J."/>
            <person name="Hostin D."/>
            <person name="Houston K.A."/>
            <person name="Howland T.J."/>
            <person name="Wei M.-H."/>
            <person name="Ibegwam C."/>
            <person name="Jalali M."/>
            <person name="Kalush F."/>
            <person name="Karpen G.H."/>
            <person name="Ke Z."/>
            <person name="Kennison J.A."/>
            <person name="Ketchum K.A."/>
            <person name="Kimmel B.E."/>
            <person name="Kodira C.D."/>
            <person name="Kraft C.L."/>
            <person name="Kravitz S."/>
            <person name="Kulp D."/>
            <person name="Lai Z."/>
            <person name="Lasko P."/>
            <person name="Lei Y."/>
            <person name="Levitsky A.A."/>
            <person name="Li J.H."/>
            <person name="Li Z."/>
            <person name="Liang Y."/>
            <person name="Lin X."/>
            <person name="Liu X."/>
            <person name="Mattei B."/>
            <person name="McIntosh T.C."/>
            <person name="McLeod M.P."/>
            <person name="McPherson D."/>
            <person name="Merkulov G."/>
            <person name="Milshina N.V."/>
            <person name="Mobarry C."/>
            <person name="Morris J."/>
            <person name="Moshrefi A."/>
            <person name="Mount S.M."/>
            <person name="Moy M."/>
            <person name="Murphy B."/>
            <person name="Murphy L."/>
            <person name="Muzny D.M."/>
            <person name="Nelson D.L."/>
            <person name="Nelson D.R."/>
            <person name="Nelson K.A."/>
            <person name="Nixon K."/>
            <person name="Nusskern D.R."/>
            <person name="Pacleb J.M."/>
            <person name="Palazzolo M."/>
            <person name="Pittman G.S."/>
            <person name="Pan S."/>
            <person name="Pollard J."/>
            <person name="Puri V."/>
            <person name="Reese M.G."/>
            <person name="Reinert K."/>
            <person name="Remington K."/>
            <person name="Saunders R.D.C."/>
            <person name="Scheeler F."/>
            <person name="Shen H."/>
            <person name="Shue B.C."/>
            <person name="Siden-Kiamos I."/>
            <person name="Simpson M."/>
            <person name="Skupski M.P."/>
            <person name="Smith T.J."/>
            <person name="Spier E."/>
            <person name="Spradling A.C."/>
            <person name="Stapleton M."/>
            <person name="Strong R."/>
            <person name="Sun E."/>
            <person name="Svirskas R."/>
            <person name="Tector C."/>
            <person name="Turner R."/>
            <person name="Venter E."/>
            <person name="Wang A.H."/>
            <person name="Wang X."/>
            <person name="Wang Z.-Y."/>
            <person name="Wassarman D.A."/>
            <person name="Weinstock G.M."/>
            <person name="Weissenbach J."/>
            <person name="Williams S.M."/>
            <person name="Woodage T."/>
            <person name="Worley K.C."/>
            <person name="Wu D."/>
            <person name="Yang S."/>
            <person name="Yao Q.A."/>
            <person name="Ye J."/>
            <person name="Yeh R.-F."/>
            <person name="Zaveri J.S."/>
            <person name="Zhan M."/>
            <person name="Zhang G."/>
            <person name="Zhao Q."/>
            <person name="Zheng L."/>
            <person name="Zheng X.H."/>
            <person name="Zhong F.N."/>
            <person name="Zhong W."/>
            <person name="Zhou X."/>
            <person name="Zhu S.C."/>
            <person name="Zhu X."/>
            <person name="Smith H.O."/>
            <person name="Gibbs R.A."/>
            <person name="Myers E.W."/>
            <person name="Rubin G.M."/>
            <person name="Venter J.C."/>
        </authorList>
    </citation>
    <scope>NUCLEOTIDE SEQUENCE [LARGE SCALE GENOMIC DNA]</scope>
    <source>
        <strain>Berkeley</strain>
    </source>
</reference>
<reference key="4">
    <citation type="journal article" date="2002" name="Genome Biol.">
        <title>Annotation of the Drosophila melanogaster euchromatic genome: a systematic review.</title>
        <authorList>
            <person name="Misra S."/>
            <person name="Crosby M.A."/>
            <person name="Mungall C.J."/>
            <person name="Matthews B.B."/>
            <person name="Campbell K.S."/>
            <person name="Hradecky P."/>
            <person name="Huang Y."/>
            <person name="Kaminker J.S."/>
            <person name="Millburn G.H."/>
            <person name="Prochnik S.E."/>
            <person name="Smith C.D."/>
            <person name="Tupy J.L."/>
            <person name="Whitfield E.J."/>
            <person name="Bayraktaroglu L."/>
            <person name="Berman B.P."/>
            <person name="Bettencourt B.R."/>
            <person name="Celniker S.E."/>
            <person name="de Grey A.D.N.J."/>
            <person name="Drysdale R.A."/>
            <person name="Harris N.L."/>
            <person name="Richter J."/>
            <person name="Russo S."/>
            <person name="Schroeder A.J."/>
            <person name="Shu S.Q."/>
            <person name="Stapleton M."/>
            <person name="Yamada C."/>
            <person name="Ashburner M."/>
            <person name="Gelbart W.M."/>
            <person name="Rubin G.M."/>
            <person name="Lewis S.E."/>
        </authorList>
    </citation>
    <scope>GENOME REANNOTATION</scope>
    <source>
        <strain>Berkeley</strain>
    </source>
</reference>
<reference key="5">
    <citation type="submission" date="2003-01" db="EMBL/GenBank/DDBJ databases">
        <authorList>
            <person name="Stapleton M."/>
            <person name="Brokstein P."/>
            <person name="Hong L."/>
            <person name="Agbayani A."/>
            <person name="Carlson J.W."/>
            <person name="Champe M."/>
            <person name="Chavez C."/>
            <person name="Dorsett V."/>
            <person name="Dresnek D."/>
            <person name="Farfan D."/>
            <person name="Frise E."/>
            <person name="George R.A."/>
            <person name="Gonzalez M."/>
            <person name="Guarin H."/>
            <person name="Kronmiller B."/>
            <person name="Li P.W."/>
            <person name="Liao G."/>
            <person name="Miranda A."/>
            <person name="Mungall C.J."/>
            <person name="Nunoo J."/>
            <person name="Pacleb J.M."/>
            <person name="Paragas V."/>
            <person name="Park S."/>
            <person name="Patel S."/>
            <person name="Phouanenavong S."/>
            <person name="Wan K.H."/>
            <person name="Yu C."/>
            <person name="Lewis S.E."/>
            <person name="Rubin G.M."/>
            <person name="Celniker S.E."/>
        </authorList>
    </citation>
    <scope>NUCLEOTIDE SEQUENCE [LARGE SCALE MRNA] OF 5-278</scope>
    <source>
        <strain>Berkeley</strain>
        <tissue>Embryo</tissue>
    </source>
</reference>
<reference key="6">
    <citation type="journal article" date="2001" name="Mol. Cell. Biol.">
        <title>The novel transcription factor e(y)2 interacts with TAF(II)40 and potentiates transcription activation on chromatin templates.</title>
        <authorList>
            <person name="Georgieva S."/>
            <person name="Nabirochkina E."/>
            <person name="Dilworth F.J."/>
            <person name="Eickhoff H."/>
            <person name="Becker P."/>
            <person name="Tora L."/>
            <person name="Georgiev P."/>
            <person name="Soldatov A."/>
        </authorList>
    </citation>
    <scope>INTERACTION WITH E(Y)2</scope>
    <scope>DOMAIN</scope>
</reference>
<reference key="7">
    <citation type="journal article" date="1996" name="Nature">
        <title>Structural similarity between TAFs and the heterotetrameric core of the histone octamer.</title>
        <authorList>
            <person name="Xie X."/>
            <person name="Kokubo T."/>
            <person name="Cohen S.L."/>
            <person name="Mirza U.A."/>
            <person name="Hoffmann A."/>
            <person name="Chait B.T."/>
            <person name="Roeder R.G."/>
            <person name="Nakatani Y."/>
            <person name="Burley S.K."/>
        </authorList>
    </citation>
    <scope>X-RAY CRYSTALLOGRAPHY (2.0 ANGSTROMS) OF 19-86</scope>
    <scope>INTERACTION WITH TAF6</scope>
</reference>
<feature type="chain" id="PRO_0000118894" description="Transcription initiation factor TFIID subunit 9">
    <location>
        <begin position="1"/>
        <end position="278"/>
    </location>
</feature>
<feature type="region of interest" description="Disordered" evidence="1">
    <location>
        <begin position="193"/>
        <end position="278"/>
    </location>
</feature>
<feature type="compositionally biased region" description="Gly residues" evidence="1">
    <location>
        <begin position="200"/>
        <end position="210"/>
    </location>
</feature>
<feature type="compositionally biased region" description="Low complexity" evidence="1">
    <location>
        <begin position="231"/>
        <end position="240"/>
    </location>
</feature>
<feature type="compositionally biased region" description="Gly residues" evidence="1">
    <location>
        <begin position="241"/>
        <end position="259"/>
    </location>
</feature>
<feature type="compositionally biased region" description="Acidic residues" evidence="1">
    <location>
        <begin position="269"/>
        <end position="278"/>
    </location>
</feature>
<feature type="helix" evidence="10">
    <location>
        <begin position="20"/>
        <end position="31"/>
    </location>
</feature>
<feature type="helix" evidence="10">
    <location>
        <begin position="40"/>
        <end position="66"/>
    </location>
</feature>
<feature type="strand" evidence="10">
    <location>
        <begin position="70"/>
        <end position="72"/>
    </location>
</feature>
<feature type="helix" evidence="10">
    <location>
        <begin position="74"/>
        <end position="83"/>
    </location>
</feature>
<dbReference type="EMBL" id="U06458">
    <property type="protein sequence ID" value="AAC47347.1"/>
    <property type="molecule type" value="mRNA"/>
</dbReference>
<dbReference type="EMBL" id="L29540">
    <property type="protein sequence ID" value="AAA28488.1"/>
    <property type="molecule type" value="mRNA"/>
</dbReference>
<dbReference type="EMBL" id="AE014298">
    <property type="protein sequence ID" value="AAF48767.3"/>
    <property type="molecule type" value="Genomic_DNA"/>
</dbReference>
<dbReference type="EMBL" id="AY061338">
    <property type="protein sequence ID" value="AAL28886.2"/>
    <property type="molecule type" value="mRNA"/>
</dbReference>
<dbReference type="PIR" id="A49067">
    <property type="entry name" value="A49067"/>
</dbReference>
<dbReference type="RefSeq" id="NP_523391.3">
    <property type="nucleotide sequence ID" value="NM_078667.4"/>
</dbReference>
<dbReference type="PDB" id="1TAF">
    <property type="method" value="X-ray"/>
    <property type="resolution" value="2.00 A"/>
    <property type="chains" value="A=19-86"/>
</dbReference>
<dbReference type="PDBsum" id="1TAF"/>
<dbReference type="SMR" id="Q27272"/>
<dbReference type="BioGRID" id="59084">
    <property type="interactions" value="42"/>
</dbReference>
<dbReference type="ComplexPortal" id="CPX-2644">
    <property type="entry name" value="SAGA complex"/>
</dbReference>
<dbReference type="DIP" id="DIP-239N"/>
<dbReference type="FunCoup" id="Q27272">
    <property type="interactions" value="1404"/>
</dbReference>
<dbReference type="IntAct" id="Q27272">
    <property type="interactions" value="16"/>
</dbReference>
<dbReference type="STRING" id="7227.FBpp0074237"/>
<dbReference type="PaxDb" id="7227-FBpp0074237"/>
<dbReference type="EnsemblMetazoa" id="FBtr0074463">
    <property type="protein sequence ID" value="FBpp0074237"/>
    <property type="gene ID" value="FBgn0000617"/>
</dbReference>
<dbReference type="GeneID" id="32762"/>
<dbReference type="KEGG" id="dme:Dmel_CG6474"/>
<dbReference type="AGR" id="FB:FBgn0000617"/>
<dbReference type="CTD" id="6880"/>
<dbReference type="FlyBase" id="FBgn0000617">
    <property type="gene designation" value="Taf9"/>
</dbReference>
<dbReference type="VEuPathDB" id="VectorBase:FBgn0000617"/>
<dbReference type="eggNOG" id="KOG3334">
    <property type="taxonomic scope" value="Eukaryota"/>
</dbReference>
<dbReference type="GeneTree" id="ENSGT00940000169542"/>
<dbReference type="HOGENOM" id="CLU_068315_2_0_1"/>
<dbReference type="InParanoid" id="Q27272"/>
<dbReference type="OMA" id="ACNYKLR"/>
<dbReference type="OrthoDB" id="341924at2759"/>
<dbReference type="PhylomeDB" id="Q27272"/>
<dbReference type="Reactome" id="R-DME-5689880">
    <property type="pathway name" value="Ub-specific processing proteases"/>
</dbReference>
<dbReference type="Reactome" id="R-DME-674695">
    <property type="pathway name" value="RNA Polymerase II Pre-transcription Events"/>
</dbReference>
<dbReference type="Reactome" id="R-DME-6804756">
    <property type="pathway name" value="Regulation of TP53 Activity through Phosphorylation"/>
</dbReference>
<dbReference type="Reactome" id="R-DME-6807505">
    <property type="pathway name" value="RNA polymerase II transcribes snRNA genes"/>
</dbReference>
<dbReference type="Reactome" id="R-DME-73776">
    <property type="pathway name" value="RNA Polymerase II Promoter Escape"/>
</dbReference>
<dbReference type="Reactome" id="R-DME-73779">
    <property type="pathway name" value="RNA Polymerase II Transcription Pre-Initiation And Promoter Opening"/>
</dbReference>
<dbReference type="Reactome" id="R-DME-75953">
    <property type="pathway name" value="RNA Polymerase II Transcription Initiation"/>
</dbReference>
<dbReference type="Reactome" id="R-DME-76042">
    <property type="pathway name" value="RNA Polymerase II Transcription Initiation And Promoter Clearance"/>
</dbReference>
<dbReference type="SignaLink" id="Q27272"/>
<dbReference type="BioGRID-ORCS" id="32762">
    <property type="hits" value="1 hit in 3 CRISPR screens"/>
</dbReference>
<dbReference type="EvolutionaryTrace" id="Q27272"/>
<dbReference type="GenomeRNAi" id="32762"/>
<dbReference type="PRO" id="PR:Q27272"/>
<dbReference type="Proteomes" id="UP000000803">
    <property type="component" value="Chromosome X"/>
</dbReference>
<dbReference type="Bgee" id="FBgn0000617">
    <property type="expression patterns" value="Expressed in T neuron T5d (Drosophila) in embryonic/larval optic lobe (Drosophila) and 58 other cell types or tissues"/>
</dbReference>
<dbReference type="ExpressionAtlas" id="Q27272">
    <property type="expression patterns" value="baseline and differential"/>
</dbReference>
<dbReference type="GO" id="GO:0005634">
    <property type="term" value="C:nucleus"/>
    <property type="evidence" value="ECO:0000314"/>
    <property type="project" value="FlyBase"/>
</dbReference>
<dbReference type="GO" id="GO:0000124">
    <property type="term" value="C:SAGA complex"/>
    <property type="evidence" value="ECO:0000314"/>
    <property type="project" value="FlyBase"/>
</dbReference>
<dbReference type="GO" id="GO:0005669">
    <property type="term" value="C:transcription factor TFIID complex"/>
    <property type="evidence" value="ECO:0000314"/>
    <property type="project" value="FlyBase"/>
</dbReference>
<dbReference type="GO" id="GO:0046982">
    <property type="term" value="F:protein heterodimerization activity"/>
    <property type="evidence" value="ECO:0000353"/>
    <property type="project" value="FlyBase"/>
</dbReference>
<dbReference type="GO" id="GO:0003713">
    <property type="term" value="F:transcription coactivator activity"/>
    <property type="evidence" value="ECO:0000318"/>
    <property type="project" value="GO_Central"/>
</dbReference>
<dbReference type="GO" id="GO:0001223">
    <property type="term" value="F:transcription coactivator binding"/>
    <property type="evidence" value="ECO:0000353"/>
    <property type="project" value="FlyBase"/>
</dbReference>
<dbReference type="GO" id="GO:0030707">
    <property type="term" value="P:follicle cell of egg chamber development"/>
    <property type="evidence" value="ECO:0000315"/>
    <property type="project" value="FlyBase"/>
</dbReference>
<dbReference type="GO" id="GO:0051123">
    <property type="term" value="P:RNA polymerase II preinitiation complex assembly"/>
    <property type="evidence" value="ECO:0000318"/>
    <property type="project" value="GO_Central"/>
</dbReference>
<dbReference type="GO" id="GO:0006366">
    <property type="term" value="P:transcription by RNA polymerase II"/>
    <property type="evidence" value="ECO:0000314"/>
    <property type="project" value="FlyBase"/>
</dbReference>
<dbReference type="GO" id="GO:0006367">
    <property type="term" value="P:transcription initiation at RNA polymerase II promoter"/>
    <property type="evidence" value="ECO:0000250"/>
    <property type="project" value="FlyBase"/>
</dbReference>
<dbReference type="CDD" id="cd07979">
    <property type="entry name" value="HFD_TAF9"/>
    <property type="match status" value="1"/>
</dbReference>
<dbReference type="FunFam" id="1.10.20.10:FF:000018">
    <property type="entry name" value="Transcription initiation factor TFIID subunit 9"/>
    <property type="match status" value="1"/>
</dbReference>
<dbReference type="Gene3D" id="1.10.20.10">
    <property type="entry name" value="Histone, subunit A"/>
    <property type="match status" value="1"/>
</dbReference>
<dbReference type="InterPro" id="IPR009072">
    <property type="entry name" value="Histone-fold"/>
</dbReference>
<dbReference type="InterPro" id="IPR003162">
    <property type="entry name" value="TFIID-31"/>
</dbReference>
<dbReference type="InterPro" id="IPR051431">
    <property type="entry name" value="TFIID_subunit_9"/>
</dbReference>
<dbReference type="PANTHER" id="PTHR48068">
    <property type="entry name" value="TAF9 RNA POLYMERASE II, TATA BOX-BINDING PROTEIN (TBP)-ASSOCIATED FACTOR"/>
    <property type="match status" value="1"/>
</dbReference>
<dbReference type="PANTHER" id="PTHR48068:SF4">
    <property type="entry name" value="TATA-BOX BINDING PROTEIN ASSOCIATED FACTOR 9"/>
    <property type="match status" value="1"/>
</dbReference>
<dbReference type="Pfam" id="PF02291">
    <property type="entry name" value="TFIID-31kDa"/>
    <property type="match status" value="1"/>
</dbReference>
<dbReference type="SUPFAM" id="SSF47113">
    <property type="entry name" value="Histone-fold"/>
    <property type="match status" value="1"/>
</dbReference>
<gene>
    <name evidence="9" type="primary">Taf9</name>
    <name evidence="9" type="synonym">e(y)1</name>
    <name evidence="9" type="synonym">TAF40</name>
    <name evidence="6" type="synonym">TAFII40</name>
    <name evidence="9" type="ORF">CG6474</name>
</gene>
<sequence>MSAEKSDKAKISAQIKHVPKDAQVIMSILKELNVQEYEPRVVNQLLEFTFRYVTCILDDAKVYANHARKKTIDLDDVRLATEVTLDKSFTGPLERHVLAKVADVRNSMPLPPIKPHCGLRLPPDRYCLTGVNYKLRATNQPKKMTKSAVEGRPLKTVVKPVSSANGPKRPHSVVAKQQVVTIPKPVIKFTTTTTTKTVGSSGGSGGGGGQEVKSESTGAGGDLKMEVDSDAAAVGSIAGASGSGAGSASGGGGGGGSSGVGVAVKREREEEEFEFVTN</sequence>
<name>TAF9_DROME</name>
<comment type="function">
    <text evidence="3">TFIID is a multimeric protein complex that plays a central role in mediating promoter responses to various activators and repressors.</text>
</comment>
<comment type="subunit">
    <text evidence="2 4">Belongs to the TFIID complex which is composed of TATA binding protein (Tbp) and a number of TBP-associated factors (TAFs) (PubMed:11438676, PubMed:8598927). Taf9 and Taf6 exist as a heterotetramer (PubMed:8598927). Interacts with e(y)2 (PubMed:11438676).</text>
</comment>
<comment type="interaction">
    <interactant intactId="EBI-174260">
        <id>Q27272</id>
    </interactant>
    <interactant intactId="EBI-136204">
        <id>P49847</id>
        <label>Taf6</label>
    </interactant>
    <organismsDiffer>false</organismsDiffer>
    <experiments>2</experiments>
</comment>
<comment type="subcellular location">
    <subcellularLocation>
        <location>Nucleus</location>
    </subcellularLocation>
</comment>
<comment type="domain">
    <text evidence="2">The C-terminus is important for mediating interaction with e(y)2.</text>
</comment>
<comment type="similarity">
    <text evidence="8">Belongs to the TAF9 family.</text>
</comment>
<protein>
    <recommendedName>
        <fullName evidence="8">Transcription initiation factor TFIID subunit 9</fullName>
    </recommendedName>
    <alternativeName>
        <fullName evidence="8">Protein enhancer of yellow 1</fullName>
    </alternativeName>
    <alternativeName>
        <fullName evidence="9">TBP-associated factor 9</fullName>
    </alternativeName>
    <alternativeName>
        <fullName evidence="7">Transcription initiation factor TFIID 42 kDa subunit</fullName>
        <shortName evidence="7">TAFII-42</shortName>
    </alternativeName>
    <alternativeName>
        <fullName evidence="5">p42</fullName>
    </alternativeName>
</protein>
<organism>
    <name type="scientific">Drosophila melanogaster</name>
    <name type="common">Fruit fly</name>
    <dbReference type="NCBI Taxonomy" id="7227"/>
    <lineage>
        <taxon>Eukaryota</taxon>
        <taxon>Metazoa</taxon>
        <taxon>Ecdysozoa</taxon>
        <taxon>Arthropoda</taxon>
        <taxon>Hexapoda</taxon>
        <taxon>Insecta</taxon>
        <taxon>Pterygota</taxon>
        <taxon>Neoptera</taxon>
        <taxon>Endopterygota</taxon>
        <taxon>Diptera</taxon>
        <taxon>Brachycera</taxon>
        <taxon>Muscomorpha</taxon>
        <taxon>Ephydroidea</taxon>
        <taxon>Drosophilidae</taxon>
        <taxon>Drosophila</taxon>
        <taxon>Sophophora</taxon>
    </lineage>
</organism>
<proteinExistence type="evidence at protein level"/>
<evidence type="ECO:0000256" key="1">
    <source>
        <dbReference type="SAM" id="MobiDB-lite"/>
    </source>
</evidence>
<evidence type="ECO:0000269" key="2">
    <source>
    </source>
</evidence>
<evidence type="ECO:0000269" key="3">
    <source>
    </source>
</evidence>
<evidence type="ECO:0000269" key="4">
    <source>
    </source>
</evidence>
<evidence type="ECO:0000303" key="5">
    <source>
    </source>
</evidence>
<evidence type="ECO:0000303" key="6">
    <source>
    </source>
</evidence>
<evidence type="ECO:0000303" key="7">
    <source>
    </source>
</evidence>
<evidence type="ECO:0000305" key="8"/>
<evidence type="ECO:0000312" key="9">
    <source>
        <dbReference type="FlyBase" id="FBgn0000617"/>
    </source>
</evidence>
<evidence type="ECO:0007829" key="10">
    <source>
        <dbReference type="PDB" id="1TAF"/>
    </source>
</evidence>